<name>RSXD_SALDC</name>
<feature type="chain" id="PRO_1000125392" description="Ion-translocating oxidoreductase complex subunit D">
    <location>
        <begin position="1"/>
        <end position="352"/>
    </location>
</feature>
<feature type="transmembrane region" description="Helical" evidence="1">
    <location>
        <begin position="20"/>
        <end position="40"/>
    </location>
</feature>
<feature type="transmembrane region" description="Helical" evidence="1">
    <location>
        <begin position="42"/>
        <end position="62"/>
    </location>
</feature>
<feature type="transmembrane region" description="Helical" evidence="1">
    <location>
        <begin position="69"/>
        <end position="91"/>
    </location>
</feature>
<feature type="transmembrane region" description="Helical" evidence="1">
    <location>
        <begin position="123"/>
        <end position="143"/>
    </location>
</feature>
<feature type="transmembrane region" description="Helical" evidence="1">
    <location>
        <begin position="215"/>
        <end position="235"/>
    </location>
</feature>
<feature type="transmembrane region" description="Helical" evidence="1">
    <location>
        <begin position="242"/>
        <end position="262"/>
    </location>
</feature>
<feature type="transmembrane region" description="Helical" evidence="1">
    <location>
        <begin position="267"/>
        <end position="287"/>
    </location>
</feature>
<feature type="transmembrane region" description="Helical" evidence="1">
    <location>
        <begin position="301"/>
        <end position="321"/>
    </location>
</feature>
<feature type="transmembrane region" description="Helical" evidence="1">
    <location>
        <begin position="322"/>
        <end position="342"/>
    </location>
</feature>
<feature type="modified residue" description="FMN phosphoryl threonine" evidence="1">
    <location>
        <position position="187"/>
    </location>
</feature>
<accession>B5FIE8</accession>
<proteinExistence type="inferred from homology"/>
<gene>
    <name evidence="1" type="primary">rsxD</name>
    <name type="ordered locus">SeD_A1886</name>
</gene>
<dbReference type="EC" id="7.-.-.-" evidence="1"/>
<dbReference type="EMBL" id="CP001144">
    <property type="protein sequence ID" value="ACH77724.1"/>
    <property type="molecule type" value="Genomic_DNA"/>
</dbReference>
<dbReference type="RefSeq" id="WP_000231964.1">
    <property type="nucleotide sequence ID" value="NC_011205.1"/>
</dbReference>
<dbReference type="SMR" id="B5FIE8"/>
<dbReference type="KEGG" id="sed:SeD_A1886"/>
<dbReference type="HOGENOM" id="CLU_042020_0_0_6"/>
<dbReference type="Proteomes" id="UP000008322">
    <property type="component" value="Chromosome"/>
</dbReference>
<dbReference type="GO" id="GO:0005886">
    <property type="term" value="C:plasma membrane"/>
    <property type="evidence" value="ECO:0007669"/>
    <property type="project" value="UniProtKB-SubCell"/>
</dbReference>
<dbReference type="GO" id="GO:0022900">
    <property type="term" value="P:electron transport chain"/>
    <property type="evidence" value="ECO:0007669"/>
    <property type="project" value="UniProtKB-UniRule"/>
</dbReference>
<dbReference type="GO" id="GO:0055085">
    <property type="term" value="P:transmembrane transport"/>
    <property type="evidence" value="ECO:0007669"/>
    <property type="project" value="InterPro"/>
</dbReference>
<dbReference type="HAMAP" id="MF_00462">
    <property type="entry name" value="RsxD_RnfD"/>
    <property type="match status" value="1"/>
</dbReference>
<dbReference type="InterPro" id="IPR004338">
    <property type="entry name" value="NqrB/RnfD"/>
</dbReference>
<dbReference type="InterPro" id="IPR011303">
    <property type="entry name" value="RnfD_bac"/>
</dbReference>
<dbReference type="NCBIfam" id="NF002011">
    <property type="entry name" value="PRK00816.1"/>
    <property type="match status" value="1"/>
</dbReference>
<dbReference type="NCBIfam" id="TIGR01946">
    <property type="entry name" value="rnfD"/>
    <property type="match status" value="1"/>
</dbReference>
<dbReference type="PANTHER" id="PTHR30578">
    <property type="entry name" value="ELECTRON TRANSPORT COMPLEX PROTEIN RNFD"/>
    <property type="match status" value="1"/>
</dbReference>
<dbReference type="PANTHER" id="PTHR30578:SF0">
    <property type="entry name" value="ION-TRANSLOCATING OXIDOREDUCTASE COMPLEX SUBUNIT D"/>
    <property type="match status" value="1"/>
</dbReference>
<dbReference type="Pfam" id="PF03116">
    <property type="entry name" value="NQR2_RnfD_RnfE"/>
    <property type="match status" value="1"/>
</dbReference>
<keyword id="KW-0997">Cell inner membrane</keyword>
<keyword id="KW-1003">Cell membrane</keyword>
<keyword id="KW-0249">Electron transport</keyword>
<keyword id="KW-0285">Flavoprotein</keyword>
<keyword id="KW-0288">FMN</keyword>
<keyword id="KW-0472">Membrane</keyword>
<keyword id="KW-0597">Phosphoprotein</keyword>
<keyword id="KW-1278">Translocase</keyword>
<keyword id="KW-0812">Transmembrane</keyword>
<keyword id="KW-1133">Transmembrane helix</keyword>
<keyword id="KW-0813">Transport</keyword>
<organism>
    <name type="scientific">Salmonella dublin (strain CT_02021853)</name>
    <dbReference type="NCBI Taxonomy" id="439851"/>
    <lineage>
        <taxon>Bacteria</taxon>
        <taxon>Pseudomonadati</taxon>
        <taxon>Pseudomonadota</taxon>
        <taxon>Gammaproteobacteria</taxon>
        <taxon>Enterobacterales</taxon>
        <taxon>Enterobacteriaceae</taxon>
        <taxon>Salmonella</taxon>
    </lineage>
</organism>
<evidence type="ECO:0000255" key="1">
    <source>
        <dbReference type="HAMAP-Rule" id="MF_00462"/>
    </source>
</evidence>
<protein>
    <recommendedName>
        <fullName evidence="1">Ion-translocating oxidoreductase complex subunit D</fullName>
        <ecNumber evidence="1">7.-.-.-</ecNumber>
    </recommendedName>
    <alternativeName>
        <fullName evidence="1">Rsx electron transport complex subunit D</fullName>
    </alternativeName>
</protein>
<comment type="function">
    <text evidence="1">Part of a membrane-bound complex that couples electron transfer with translocation of ions across the membrane. Required to maintain the reduced state of SoxR.</text>
</comment>
<comment type="cofactor">
    <cofactor evidence="1">
        <name>FMN</name>
        <dbReference type="ChEBI" id="CHEBI:58210"/>
    </cofactor>
</comment>
<comment type="subunit">
    <text evidence="1">The complex is composed of six subunits: RsxA, RsxB, RsxC, RsxD, RsxE and RsxG.</text>
</comment>
<comment type="subcellular location">
    <subcellularLocation>
        <location evidence="1">Cell inner membrane</location>
        <topology evidence="1">Multi-pass membrane protein</topology>
    </subcellularLocation>
</comment>
<comment type="similarity">
    <text evidence="1">Belongs to the NqrB/RnfD family.</text>
</comment>
<sequence length="352" mass="38239">MVFRIASSPYTHNQRQTSRIMLLVVIAALPGIAAQTWFFGWGTLFQIVLAAITALVAEAIVLRLRKQSVASHLQDYSALLTGLLLAVSIPPLAPWWMVVLGTGFAIIIAKQLYGGLGQTPFNPAMIGYVVLLISFPVQMTSWLPPYEIAATTPDMLDTLRMIFTGHTASGGDMTLLRIGIDGISQATPLDTFKTSLRAGHSVEQIMQYPIYSGALAGVGWQWVNLAWLVGGVFLLWQKAIRWHIPVSFLLTLALCAALGWLFSPATLASPQLHLLSGATMLGAFFILTDPVTASTTNRGRLIFGALAGVLVWLIRSFGGYPDGVAFAVLLANITVPLIDYYTRPRVYGHRKG</sequence>
<reference key="1">
    <citation type="journal article" date="2011" name="J. Bacteriol.">
        <title>Comparative genomics of 28 Salmonella enterica isolates: evidence for CRISPR-mediated adaptive sublineage evolution.</title>
        <authorList>
            <person name="Fricke W.F."/>
            <person name="Mammel M.K."/>
            <person name="McDermott P.F."/>
            <person name="Tartera C."/>
            <person name="White D.G."/>
            <person name="Leclerc J.E."/>
            <person name="Ravel J."/>
            <person name="Cebula T.A."/>
        </authorList>
    </citation>
    <scope>NUCLEOTIDE SEQUENCE [LARGE SCALE GENOMIC DNA]</scope>
    <source>
        <strain>CT_02021853</strain>
    </source>
</reference>